<name>CARA_LISMO</name>
<sequence length="363" mass="40055">MTKRILMLEDGNYFIGDAIGSEKETIGEVVFNTGMTGYQETITDPSYYGQIITFTYPLVGNYGVNRDDFESINPAVKGVVVREAAEFASNWRNQITLNEFLKEKGIPGIAGIDTRKLTKLIRKEGTLKGILAAETADKEELLHHLRSVRLPVDQVHEVSSAKAFASPGDGKRVVLVDYGVKSSILRELNKRNCYVTVVPYNTSAEEILAMHPDGVMLSNGPGDPKDVPEALEMIRGIQGKLPLFGICLGHQLFALANGADTFKLKFGHRGANHPVKELATGRVDFTAQNHGYAVEKDSLIGTDLKVTHIELNDETVEGLAHKEYPAYTVQYHPEANPGPSDVNYLFDEFMEMMNGKEEGELHA</sequence>
<reference key="1">
    <citation type="journal article" date="2001" name="Science">
        <title>Comparative genomics of Listeria species.</title>
        <authorList>
            <person name="Glaser P."/>
            <person name="Frangeul L."/>
            <person name="Buchrieser C."/>
            <person name="Rusniok C."/>
            <person name="Amend A."/>
            <person name="Baquero F."/>
            <person name="Berche P."/>
            <person name="Bloecker H."/>
            <person name="Brandt P."/>
            <person name="Chakraborty T."/>
            <person name="Charbit A."/>
            <person name="Chetouani F."/>
            <person name="Couve E."/>
            <person name="de Daruvar A."/>
            <person name="Dehoux P."/>
            <person name="Domann E."/>
            <person name="Dominguez-Bernal G."/>
            <person name="Duchaud E."/>
            <person name="Durant L."/>
            <person name="Dussurget O."/>
            <person name="Entian K.-D."/>
            <person name="Fsihi H."/>
            <person name="Garcia-del Portillo F."/>
            <person name="Garrido P."/>
            <person name="Gautier L."/>
            <person name="Goebel W."/>
            <person name="Gomez-Lopez N."/>
            <person name="Hain T."/>
            <person name="Hauf J."/>
            <person name="Jackson D."/>
            <person name="Jones L.-M."/>
            <person name="Kaerst U."/>
            <person name="Kreft J."/>
            <person name="Kuhn M."/>
            <person name="Kunst F."/>
            <person name="Kurapkat G."/>
            <person name="Madueno E."/>
            <person name="Maitournam A."/>
            <person name="Mata Vicente J."/>
            <person name="Ng E."/>
            <person name="Nedjari H."/>
            <person name="Nordsiek G."/>
            <person name="Novella S."/>
            <person name="de Pablos B."/>
            <person name="Perez-Diaz J.-C."/>
            <person name="Purcell R."/>
            <person name="Remmel B."/>
            <person name="Rose M."/>
            <person name="Schlueter T."/>
            <person name="Simoes N."/>
            <person name="Tierrez A."/>
            <person name="Vazquez-Boland J.-A."/>
            <person name="Voss H."/>
            <person name="Wehland J."/>
            <person name="Cossart P."/>
        </authorList>
    </citation>
    <scope>NUCLEOTIDE SEQUENCE [LARGE SCALE GENOMIC DNA]</scope>
    <source>
        <strain>ATCC BAA-679 / EGD-e</strain>
    </source>
</reference>
<organism>
    <name type="scientific">Listeria monocytogenes serovar 1/2a (strain ATCC BAA-679 / EGD-e)</name>
    <dbReference type="NCBI Taxonomy" id="169963"/>
    <lineage>
        <taxon>Bacteria</taxon>
        <taxon>Bacillati</taxon>
        <taxon>Bacillota</taxon>
        <taxon>Bacilli</taxon>
        <taxon>Bacillales</taxon>
        <taxon>Listeriaceae</taxon>
        <taxon>Listeria</taxon>
    </lineage>
</organism>
<evidence type="ECO:0000255" key="1">
    <source>
        <dbReference type="HAMAP-Rule" id="MF_01209"/>
    </source>
</evidence>
<keyword id="KW-0028">Amino-acid biosynthesis</keyword>
<keyword id="KW-0055">Arginine biosynthesis</keyword>
<keyword id="KW-0067">ATP-binding</keyword>
<keyword id="KW-0315">Glutamine amidotransferase</keyword>
<keyword id="KW-0436">Ligase</keyword>
<keyword id="KW-0547">Nucleotide-binding</keyword>
<keyword id="KW-0665">Pyrimidine biosynthesis</keyword>
<keyword id="KW-1185">Reference proteome</keyword>
<proteinExistence type="inferred from homology"/>
<protein>
    <recommendedName>
        <fullName evidence="1">Carbamoyl phosphate synthase small chain</fullName>
        <ecNumber evidence="1">6.3.5.5</ecNumber>
    </recommendedName>
    <alternativeName>
        <fullName evidence="1">Carbamoyl phosphate synthetase glutamine chain</fullName>
    </alternativeName>
</protein>
<accession>Q8Y664</accession>
<dbReference type="EC" id="6.3.5.5" evidence="1"/>
<dbReference type="EMBL" id="AL591981">
    <property type="protein sequence ID" value="CAC99914.1"/>
    <property type="molecule type" value="Genomic_DNA"/>
</dbReference>
<dbReference type="PIR" id="AD1304">
    <property type="entry name" value="AD1304"/>
</dbReference>
<dbReference type="RefSeq" id="NP_465361.1">
    <property type="nucleotide sequence ID" value="NC_003210.1"/>
</dbReference>
<dbReference type="RefSeq" id="WP_003723080.1">
    <property type="nucleotide sequence ID" value="NZ_CP149495.1"/>
</dbReference>
<dbReference type="SMR" id="Q8Y664"/>
<dbReference type="STRING" id="169963.gene:17594521"/>
<dbReference type="MEROPS" id="C26.952"/>
<dbReference type="PaxDb" id="169963-lmo1836"/>
<dbReference type="EnsemblBacteria" id="CAC99914">
    <property type="protein sequence ID" value="CAC99914"/>
    <property type="gene ID" value="CAC99914"/>
</dbReference>
<dbReference type="GeneID" id="985872"/>
<dbReference type="KEGG" id="lmo:lmo1836"/>
<dbReference type="PATRIC" id="fig|169963.11.peg.1881"/>
<dbReference type="eggNOG" id="COG0505">
    <property type="taxonomic scope" value="Bacteria"/>
</dbReference>
<dbReference type="HOGENOM" id="CLU_035901_2_1_9"/>
<dbReference type="OrthoDB" id="9804328at2"/>
<dbReference type="PhylomeDB" id="Q8Y664"/>
<dbReference type="BioCyc" id="LMON169963:LMO1836-MONOMER"/>
<dbReference type="UniPathway" id="UPA00068">
    <property type="reaction ID" value="UER00171"/>
</dbReference>
<dbReference type="UniPathway" id="UPA00070">
    <property type="reaction ID" value="UER00115"/>
</dbReference>
<dbReference type="Proteomes" id="UP000000817">
    <property type="component" value="Chromosome"/>
</dbReference>
<dbReference type="GO" id="GO:0005524">
    <property type="term" value="F:ATP binding"/>
    <property type="evidence" value="ECO:0007669"/>
    <property type="project" value="UniProtKB-UniRule"/>
</dbReference>
<dbReference type="GO" id="GO:0004088">
    <property type="term" value="F:carbamoyl-phosphate synthase (glutamine-hydrolyzing) activity"/>
    <property type="evidence" value="ECO:0007669"/>
    <property type="project" value="UniProtKB-UniRule"/>
</dbReference>
<dbReference type="GO" id="GO:0004359">
    <property type="term" value="F:glutaminase activity"/>
    <property type="evidence" value="ECO:0007669"/>
    <property type="project" value="RHEA"/>
</dbReference>
<dbReference type="GO" id="GO:0006207">
    <property type="term" value="P:'de novo' pyrimidine nucleobase biosynthetic process"/>
    <property type="evidence" value="ECO:0007669"/>
    <property type="project" value="InterPro"/>
</dbReference>
<dbReference type="GO" id="GO:0044205">
    <property type="term" value="P:'de novo' UMP biosynthetic process"/>
    <property type="evidence" value="ECO:0007669"/>
    <property type="project" value="UniProtKB-UniRule"/>
</dbReference>
<dbReference type="GO" id="GO:0006541">
    <property type="term" value="P:glutamine metabolic process"/>
    <property type="evidence" value="ECO:0007669"/>
    <property type="project" value="InterPro"/>
</dbReference>
<dbReference type="GO" id="GO:0006526">
    <property type="term" value="P:L-arginine biosynthetic process"/>
    <property type="evidence" value="ECO:0007669"/>
    <property type="project" value="UniProtKB-UniRule"/>
</dbReference>
<dbReference type="CDD" id="cd01744">
    <property type="entry name" value="GATase1_CPSase"/>
    <property type="match status" value="1"/>
</dbReference>
<dbReference type="FunFam" id="3.40.50.880:FF:000029">
    <property type="entry name" value="Carbamoyl-phosphate synthase small chain"/>
    <property type="match status" value="1"/>
</dbReference>
<dbReference type="FunFam" id="3.50.30.20:FF:000001">
    <property type="entry name" value="Carbamoyl-phosphate synthase small chain"/>
    <property type="match status" value="1"/>
</dbReference>
<dbReference type="Gene3D" id="3.40.50.880">
    <property type="match status" value="1"/>
</dbReference>
<dbReference type="Gene3D" id="3.50.30.20">
    <property type="entry name" value="Carbamoyl-phosphate synthase small subunit, N-terminal domain"/>
    <property type="match status" value="1"/>
</dbReference>
<dbReference type="HAMAP" id="MF_01209">
    <property type="entry name" value="CPSase_S_chain"/>
    <property type="match status" value="1"/>
</dbReference>
<dbReference type="InterPro" id="IPR050472">
    <property type="entry name" value="Anth_synth/Amidotransfase"/>
</dbReference>
<dbReference type="InterPro" id="IPR006274">
    <property type="entry name" value="CarbamoylP_synth_ssu"/>
</dbReference>
<dbReference type="InterPro" id="IPR002474">
    <property type="entry name" value="CarbamoylP_synth_ssu_N"/>
</dbReference>
<dbReference type="InterPro" id="IPR036480">
    <property type="entry name" value="CarbP_synth_ssu_N_sf"/>
</dbReference>
<dbReference type="InterPro" id="IPR029062">
    <property type="entry name" value="Class_I_gatase-like"/>
</dbReference>
<dbReference type="InterPro" id="IPR035686">
    <property type="entry name" value="CPSase_GATase1"/>
</dbReference>
<dbReference type="InterPro" id="IPR017926">
    <property type="entry name" value="GATASE"/>
</dbReference>
<dbReference type="NCBIfam" id="TIGR01368">
    <property type="entry name" value="CPSaseIIsmall"/>
    <property type="match status" value="1"/>
</dbReference>
<dbReference type="NCBIfam" id="NF009475">
    <property type="entry name" value="PRK12838.1"/>
    <property type="match status" value="1"/>
</dbReference>
<dbReference type="PANTHER" id="PTHR43418:SF7">
    <property type="entry name" value="CARBAMOYL-PHOSPHATE SYNTHASE SMALL CHAIN"/>
    <property type="match status" value="1"/>
</dbReference>
<dbReference type="PANTHER" id="PTHR43418">
    <property type="entry name" value="MULTIFUNCTIONAL TRYPTOPHAN BIOSYNTHESIS PROTEIN-RELATED"/>
    <property type="match status" value="1"/>
</dbReference>
<dbReference type="Pfam" id="PF00988">
    <property type="entry name" value="CPSase_sm_chain"/>
    <property type="match status" value="1"/>
</dbReference>
<dbReference type="Pfam" id="PF00117">
    <property type="entry name" value="GATase"/>
    <property type="match status" value="1"/>
</dbReference>
<dbReference type="PRINTS" id="PR00097">
    <property type="entry name" value="ANTSNTHASEII"/>
</dbReference>
<dbReference type="PRINTS" id="PR00099">
    <property type="entry name" value="CPSGATASE"/>
</dbReference>
<dbReference type="PRINTS" id="PR00096">
    <property type="entry name" value="GATASE"/>
</dbReference>
<dbReference type="SMART" id="SM01097">
    <property type="entry name" value="CPSase_sm_chain"/>
    <property type="match status" value="1"/>
</dbReference>
<dbReference type="SUPFAM" id="SSF52021">
    <property type="entry name" value="Carbamoyl phosphate synthetase, small subunit N-terminal domain"/>
    <property type="match status" value="1"/>
</dbReference>
<dbReference type="SUPFAM" id="SSF52317">
    <property type="entry name" value="Class I glutamine amidotransferase-like"/>
    <property type="match status" value="1"/>
</dbReference>
<dbReference type="PROSITE" id="PS51273">
    <property type="entry name" value="GATASE_TYPE_1"/>
    <property type="match status" value="1"/>
</dbReference>
<feature type="chain" id="PRO_0000112292" description="Carbamoyl phosphate synthase small chain">
    <location>
        <begin position="1"/>
        <end position="363"/>
    </location>
</feature>
<feature type="domain" description="Glutamine amidotransferase type-1" evidence="1">
    <location>
        <begin position="172"/>
        <end position="359"/>
    </location>
</feature>
<feature type="region of interest" description="CPSase" evidence="1">
    <location>
        <begin position="1"/>
        <end position="172"/>
    </location>
</feature>
<feature type="active site" description="Nucleophile" evidence="1">
    <location>
        <position position="247"/>
    </location>
</feature>
<feature type="active site" evidence="1">
    <location>
        <position position="332"/>
    </location>
</feature>
<feature type="active site" evidence="1">
    <location>
        <position position="334"/>
    </location>
</feature>
<feature type="binding site" evidence="1">
    <location>
        <position position="46"/>
    </location>
    <ligand>
        <name>L-glutamine</name>
        <dbReference type="ChEBI" id="CHEBI:58359"/>
    </ligand>
</feature>
<feature type="binding site" evidence="1">
    <location>
        <position position="220"/>
    </location>
    <ligand>
        <name>L-glutamine</name>
        <dbReference type="ChEBI" id="CHEBI:58359"/>
    </ligand>
</feature>
<feature type="binding site" evidence="1">
    <location>
        <position position="222"/>
    </location>
    <ligand>
        <name>L-glutamine</name>
        <dbReference type="ChEBI" id="CHEBI:58359"/>
    </ligand>
</feature>
<feature type="binding site" evidence="1">
    <location>
        <position position="248"/>
    </location>
    <ligand>
        <name>L-glutamine</name>
        <dbReference type="ChEBI" id="CHEBI:58359"/>
    </ligand>
</feature>
<feature type="binding site" evidence="1">
    <location>
        <position position="251"/>
    </location>
    <ligand>
        <name>L-glutamine</name>
        <dbReference type="ChEBI" id="CHEBI:58359"/>
    </ligand>
</feature>
<feature type="binding site" evidence="1">
    <location>
        <position position="289"/>
    </location>
    <ligand>
        <name>L-glutamine</name>
        <dbReference type="ChEBI" id="CHEBI:58359"/>
    </ligand>
</feature>
<feature type="binding site" evidence="1">
    <location>
        <position position="291"/>
    </location>
    <ligand>
        <name>L-glutamine</name>
        <dbReference type="ChEBI" id="CHEBI:58359"/>
    </ligand>
</feature>
<feature type="binding site" evidence="1">
    <location>
        <position position="292"/>
    </location>
    <ligand>
        <name>L-glutamine</name>
        <dbReference type="ChEBI" id="CHEBI:58359"/>
    </ligand>
</feature>
<comment type="function">
    <text evidence="1">Small subunit of the glutamine-dependent carbamoyl phosphate synthetase (CPSase). CPSase catalyzes the formation of carbamoyl phosphate from the ammonia moiety of glutamine, carbonate, and phosphate donated by ATP, constituting the first step of 2 biosynthetic pathways, one leading to arginine and/or urea and the other to pyrimidine nucleotides. The small subunit (glutamine amidotransferase) binds and cleaves glutamine to supply the large subunit with the substrate ammonia.</text>
</comment>
<comment type="catalytic activity">
    <reaction evidence="1">
        <text>hydrogencarbonate + L-glutamine + 2 ATP + H2O = carbamoyl phosphate + L-glutamate + 2 ADP + phosphate + 2 H(+)</text>
        <dbReference type="Rhea" id="RHEA:18633"/>
        <dbReference type="ChEBI" id="CHEBI:15377"/>
        <dbReference type="ChEBI" id="CHEBI:15378"/>
        <dbReference type="ChEBI" id="CHEBI:17544"/>
        <dbReference type="ChEBI" id="CHEBI:29985"/>
        <dbReference type="ChEBI" id="CHEBI:30616"/>
        <dbReference type="ChEBI" id="CHEBI:43474"/>
        <dbReference type="ChEBI" id="CHEBI:58228"/>
        <dbReference type="ChEBI" id="CHEBI:58359"/>
        <dbReference type="ChEBI" id="CHEBI:456216"/>
        <dbReference type="EC" id="6.3.5.5"/>
    </reaction>
</comment>
<comment type="catalytic activity">
    <molecule>Carbamoyl phosphate synthase small chain</molecule>
    <reaction evidence="1">
        <text>L-glutamine + H2O = L-glutamate + NH4(+)</text>
        <dbReference type="Rhea" id="RHEA:15889"/>
        <dbReference type="ChEBI" id="CHEBI:15377"/>
        <dbReference type="ChEBI" id="CHEBI:28938"/>
        <dbReference type="ChEBI" id="CHEBI:29985"/>
        <dbReference type="ChEBI" id="CHEBI:58359"/>
    </reaction>
</comment>
<comment type="pathway">
    <text evidence="1">Amino-acid biosynthesis; L-arginine biosynthesis; carbamoyl phosphate from bicarbonate: step 1/1.</text>
</comment>
<comment type="pathway">
    <text evidence="1">Pyrimidine metabolism; UMP biosynthesis via de novo pathway; (S)-dihydroorotate from bicarbonate: step 1/3.</text>
</comment>
<comment type="subunit">
    <text evidence="1">Composed of two chains; the small (or glutamine) chain promotes the hydrolysis of glutamine to ammonia, which is used by the large (or ammonia) chain to synthesize carbamoyl phosphate. Tetramer of heterodimers (alpha,beta)4.</text>
</comment>
<comment type="similarity">
    <text evidence="1">Belongs to the CarA family.</text>
</comment>
<gene>
    <name evidence="1" type="primary">carA</name>
    <name type="synonym">pyrAA</name>
    <name type="ordered locus">lmo1836</name>
</gene>